<sequence>MALNLEKKQEIIKAFATKENDTGSCEVQVALLNERIKLLTEHLKANPKDHSSRLGLLKLVAQRRNLLKYIKRTAHARYVVLIEKLGIKDR</sequence>
<dbReference type="EMBL" id="CP001217">
    <property type="protein sequence ID" value="ACJ07561.1"/>
    <property type="molecule type" value="Genomic_DNA"/>
</dbReference>
<dbReference type="SMR" id="B6JKY3"/>
<dbReference type="KEGG" id="hpp:HPP12_0404"/>
<dbReference type="HOGENOM" id="CLU_148518_0_0_7"/>
<dbReference type="Proteomes" id="UP000008198">
    <property type="component" value="Chromosome"/>
</dbReference>
<dbReference type="GO" id="GO:0022627">
    <property type="term" value="C:cytosolic small ribosomal subunit"/>
    <property type="evidence" value="ECO:0007669"/>
    <property type="project" value="TreeGrafter"/>
</dbReference>
<dbReference type="GO" id="GO:0019843">
    <property type="term" value="F:rRNA binding"/>
    <property type="evidence" value="ECO:0007669"/>
    <property type="project" value="UniProtKB-UniRule"/>
</dbReference>
<dbReference type="GO" id="GO:0003735">
    <property type="term" value="F:structural constituent of ribosome"/>
    <property type="evidence" value="ECO:0007669"/>
    <property type="project" value="InterPro"/>
</dbReference>
<dbReference type="GO" id="GO:0006412">
    <property type="term" value="P:translation"/>
    <property type="evidence" value="ECO:0007669"/>
    <property type="project" value="UniProtKB-UniRule"/>
</dbReference>
<dbReference type="CDD" id="cd00353">
    <property type="entry name" value="Ribosomal_S15p_S13e"/>
    <property type="match status" value="1"/>
</dbReference>
<dbReference type="FunFam" id="1.10.287.10:FF:000002">
    <property type="entry name" value="30S ribosomal protein S15"/>
    <property type="match status" value="1"/>
</dbReference>
<dbReference type="Gene3D" id="6.10.250.3130">
    <property type="match status" value="1"/>
</dbReference>
<dbReference type="Gene3D" id="1.10.287.10">
    <property type="entry name" value="S15/NS1, RNA-binding"/>
    <property type="match status" value="1"/>
</dbReference>
<dbReference type="HAMAP" id="MF_01343_B">
    <property type="entry name" value="Ribosomal_uS15_B"/>
    <property type="match status" value="1"/>
</dbReference>
<dbReference type="InterPro" id="IPR000589">
    <property type="entry name" value="Ribosomal_uS15"/>
</dbReference>
<dbReference type="InterPro" id="IPR005290">
    <property type="entry name" value="Ribosomal_uS15_bac-type"/>
</dbReference>
<dbReference type="InterPro" id="IPR009068">
    <property type="entry name" value="uS15_NS1_RNA-bd_sf"/>
</dbReference>
<dbReference type="NCBIfam" id="TIGR00952">
    <property type="entry name" value="S15_bact"/>
    <property type="match status" value="1"/>
</dbReference>
<dbReference type="PANTHER" id="PTHR23321">
    <property type="entry name" value="RIBOSOMAL PROTEIN S15, BACTERIAL AND ORGANELLAR"/>
    <property type="match status" value="1"/>
</dbReference>
<dbReference type="PANTHER" id="PTHR23321:SF26">
    <property type="entry name" value="SMALL RIBOSOMAL SUBUNIT PROTEIN US15M"/>
    <property type="match status" value="1"/>
</dbReference>
<dbReference type="Pfam" id="PF00312">
    <property type="entry name" value="Ribosomal_S15"/>
    <property type="match status" value="1"/>
</dbReference>
<dbReference type="SMART" id="SM01387">
    <property type="entry name" value="Ribosomal_S15"/>
    <property type="match status" value="1"/>
</dbReference>
<dbReference type="SUPFAM" id="SSF47060">
    <property type="entry name" value="S15/NS1 RNA-binding domain"/>
    <property type="match status" value="1"/>
</dbReference>
<dbReference type="PROSITE" id="PS00362">
    <property type="entry name" value="RIBOSOMAL_S15"/>
    <property type="match status" value="1"/>
</dbReference>
<keyword id="KW-0687">Ribonucleoprotein</keyword>
<keyword id="KW-0689">Ribosomal protein</keyword>
<keyword id="KW-0694">RNA-binding</keyword>
<keyword id="KW-0699">rRNA-binding</keyword>
<accession>B6JKY3</accession>
<protein>
    <recommendedName>
        <fullName evidence="1">Small ribosomal subunit protein uS15</fullName>
    </recommendedName>
    <alternativeName>
        <fullName evidence="2">30S ribosomal protein S15</fullName>
    </alternativeName>
</protein>
<feature type="chain" id="PRO_1000143124" description="Small ribosomal subunit protein uS15">
    <location>
        <begin position="1"/>
        <end position="90"/>
    </location>
</feature>
<organism>
    <name type="scientific">Helicobacter pylori (strain P12)</name>
    <dbReference type="NCBI Taxonomy" id="570508"/>
    <lineage>
        <taxon>Bacteria</taxon>
        <taxon>Pseudomonadati</taxon>
        <taxon>Campylobacterota</taxon>
        <taxon>Epsilonproteobacteria</taxon>
        <taxon>Campylobacterales</taxon>
        <taxon>Helicobacteraceae</taxon>
        <taxon>Helicobacter</taxon>
    </lineage>
</organism>
<reference key="1">
    <citation type="submission" date="2008-10" db="EMBL/GenBank/DDBJ databases">
        <title>The complete genome sequence of Helicobacter pylori strain P12.</title>
        <authorList>
            <person name="Fischer W."/>
            <person name="Windhager L."/>
            <person name="Karnholz A."/>
            <person name="Zeiller M."/>
            <person name="Zimmer R."/>
            <person name="Haas R."/>
        </authorList>
    </citation>
    <scope>NUCLEOTIDE SEQUENCE [LARGE SCALE GENOMIC DNA]</scope>
    <source>
        <strain>P12</strain>
    </source>
</reference>
<name>RS15_HELP2</name>
<gene>
    <name evidence="1" type="primary">rpsO</name>
    <name type="ordered locus">HPP12_0404</name>
</gene>
<proteinExistence type="inferred from homology"/>
<comment type="function">
    <text evidence="1">One of the primary rRNA binding proteins, it binds directly to 16S rRNA where it helps nucleate assembly of the platform of the 30S subunit by binding and bridging several RNA helices of the 16S rRNA.</text>
</comment>
<comment type="function">
    <text evidence="1">Forms an intersubunit bridge (bridge B4) with the 23S rRNA of the 50S subunit in the ribosome.</text>
</comment>
<comment type="subunit">
    <text evidence="1">Part of the 30S ribosomal subunit. Forms a bridge to the 50S subunit in the 70S ribosome, contacting the 23S rRNA.</text>
</comment>
<comment type="similarity">
    <text evidence="1">Belongs to the universal ribosomal protein uS15 family.</text>
</comment>
<evidence type="ECO:0000255" key="1">
    <source>
        <dbReference type="HAMAP-Rule" id="MF_01343"/>
    </source>
</evidence>
<evidence type="ECO:0000305" key="2"/>